<gene>
    <name evidence="1" type="primary">priB</name>
    <name type="ordered locus">plu4572</name>
</gene>
<feature type="chain" id="PRO_0000199058" description="Replication restart protein PriB">
    <location>
        <begin position="1"/>
        <end position="105"/>
    </location>
</feature>
<feature type="domain" description="SSB" evidence="1">
    <location>
        <begin position="1"/>
        <end position="102"/>
    </location>
</feature>
<proteinExistence type="inferred from homology"/>
<reference key="1">
    <citation type="journal article" date="2003" name="Nat. Biotechnol.">
        <title>The genome sequence of the entomopathogenic bacterium Photorhabdus luminescens.</title>
        <authorList>
            <person name="Duchaud E."/>
            <person name="Rusniok C."/>
            <person name="Frangeul L."/>
            <person name="Buchrieser C."/>
            <person name="Givaudan A."/>
            <person name="Taourit S."/>
            <person name="Bocs S."/>
            <person name="Boursaux-Eude C."/>
            <person name="Chandler M."/>
            <person name="Charles J.-F."/>
            <person name="Dassa E."/>
            <person name="Derose R."/>
            <person name="Derzelle S."/>
            <person name="Freyssinet G."/>
            <person name="Gaudriault S."/>
            <person name="Medigue C."/>
            <person name="Lanois A."/>
            <person name="Powell K."/>
            <person name="Siguier P."/>
            <person name="Vincent R."/>
            <person name="Wingate V."/>
            <person name="Zouine M."/>
            <person name="Glaser P."/>
            <person name="Boemare N."/>
            <person name="Danchin A."/>
            <person name="Kunst F."/>
        </authorList>
    </citation>
    <scope>NUCLEOTIDE SEQUENCE [LARGE SCALE GENOMIC DNA]</scope>
    <source>
        <strain>DSM 15139 / CIP 105565 / TT01</strain>
    </source>
</reference>
<dbReference type="EMBL" id="BX571874">
    <property type="protein sequence ID" value="CAE16944.1"/>
    <property type="molecule type" value="Genomic_DNA"/>
</dbReference>
<dbReference type="RefSeq" id="WP_011148645.1">
    <property type="nucleotide sequence ID" value="NC_005126.1"/>
</dbReference>
<dbReference type="SMR" id="Q7MYU8"/>
<dbReference type="STRING" id="243265.plu4572"/>
<dbReference type="GeneID" id="48850784"/>
<dbReference type="KEGG" id="plu:plu4572"/>
<dbReference type="eggNOG" id="COG2965">
    <property type="taxonomic scope" value="Bacteria"/>
</dbReference>
<dbReference type="HOGENOM" id="CLU_166075_0_0_6"/>
<dbReference type="OrthoDB" id="9180733at2"/>
<dbReference type="Proteomes" id="UP000002514">
    <property type="component" value="Chromosome"/>
</dbReference>
<dbReference type="GO" id="GO:1990077">
    <property type="term" value="C:primosome complex"/>
    <property type="evidence" value="ECO:0007669"/>
    <property type="project" value="UniProtKB-KW"/>
</dbReference>
<dbReference type="GO" id="GO:0003697">
    <property type="term" value="F:single-stranded DNA binding"/>
    <property type="evidence" value="ECO:0007669"/>
    <property type="project" value="UniProtKB-UniRule"/>
</dbReference>
<dbReference type="GO" id="GO:0006269">
    <property type="term" value="P:DNA replication, synthesis of primer"/>
    <property type="evidence" value="ECO:0007669"/>
    <property type="project" value="UniProtKB-KW"/>
</dbReference>
<dbReference type="CDD" id="cd04496">
    <property type="entry name" value="SSB_OBF"/>
    <property type="match status" value="1"/>
</dbReference>
<dbReference type="Gene3D" id="2.40.50.140">
    <property type="entry name" value="Nucleic acid-binding proteins"/>
    <property type="match status" value="1"/>
</dbReference>
<dbReference type="HAMAP" id="MF_00720">
    <property type="entry name" value="PriB"/>
    <property type="match status" value="1"/>
</dbReference>
<dbReference type="InterPro" id="IPR012340">
    <property type="entry name" value="NA-bd_OB-fold"/>
</dbReference>
<dbReference type="InterPro" id="IPR000424">
    <property type="entry name" value="Primosome_PriB/ssb"/>
</dbReference>
<dbReference type="InterPro" id="IPR023646">
    <property type="entry name" value="Prisomal_replication_PriB"/>
</dbReference>
<dbReference type="NCBIfam" id="TIGR04418">
    <property type="entry name" value="PriB_gamma"/>
    <property type="match status" value="1"/>
</dbReference>
<dbReference type="Pfam" id="PF22657">
    <property type="entry name" value="SSB_1"/>
    <property type="match status" value="1"/>
</dbReference>
<dbReference type="PIRSF" id="PIRSF003135">
    <property type="entry name" value="Primosomal_n"/>
    <property type="match status" value="1"/>
</dbReference>
<dbReference type="SUPFAM" id="SSF50249">
    <property type="entry name" value="Nucleic acid-binding proteins"/>
    <property type="match status" value="1"/>
</dbReference>
<dbReference type="PROSITE" id="PS50935">
    <property type="entry name" value="SSB"/>
    <property type="match status" value="1"/>
</dbReference>
<accession>Q7MYU8</accession>
<comment type="function">
    <text evidence="1">Involved in the restart of stalled replication forks, which reloads the replicative helicase on sites other than the origin of replication; the PriA-PriB pathway is the major replication restart pathway. During primosome assembly it facilitates complex formation between PriA and DnaT on DNA; stabilizes PriA on DNA. Stimulates the DNA unwinding activity of PriA helicase.</text>
</comment>
<comment type="subunit">
    <text evidence="1">Homodimer. Interacts with PriA and DnaT. Component of the replication restart primosome. Primosome assembly occurs via a 'hand-off' mechanism. PriA binds to replication forks, subsequently PriB then DnaT bind; DnaT then displaces ssDNA to generate the helicase loading substrate.</text>
</comment>
<comment type="similarity">
    <text evidence="1">Belongs to the PriB family.</text>
</comment>
<protein>
    <recommendedName>
        <fullName evidence="1">Replication restart protein PriB</fullName>
    </recommendedName>
</protein>
<name>PRIB_PHOLL</name>
<sequence>MTTNRLVLSGTVCKVPIRKVSPAGIPHCQFVLEHRSQQQEAGLSRQAWCRMPVIASGQLLQVLTHSITVGSRLTVSGFISCHQGRNGLNKLVLHAEQIELIDSGD</sequence>
<keyword id="KW-0235">DNA replication</keyword>
<keyword id="KW-0238">DNA-binding</keyword>
<keyword id="KW-0639">Primosome</keyword>
<keyword id="KW-1185">Reference proteome</keyword>
<organism>
    <name type="scientific">Photorhabdus laumondii subsp. laumondii (strain DSM 15139 / CIP 105565 / TT01)</name>
    <name type="common">Photorhabdus luminescens subsp. laumondii</name>
    <dbReference type="NCBI Taxonomy" id="243265"/>
    <lineage>
        <taxon>Bacteria</taxon>
        <taxon>Pseudomonadati</taxon>
        <taxon>Pseudomonadota</taxon>
        <taxon>Gammaproteobacteria</taxon>
        <taxon>Enterobacterales</taxon>
        <taxon>Morganellaceae</taxon>
        <taxon>Photorhabdus</taxon>
    </lineage>
</organism>
<evidence type="ECO:0000255" key="1">
    <source>
        <dbReference type="HAMAP-Rule" id="MF_00720"/>
    </source>
</evidence>